<protein>
    <recommendedName>
        <fullName>Protein TBATA</fullName>
    </recommendedName>
    <alternativeName>
        <fullName>Protein SPATIAL</fullName>
    </alternativeName>
    <alternativeName>
        <fullName>Stromal protein associated with thymii and lymph node homolog</fullName>
    </alternativeName>
    <alternativeName>
        <fullName>Thymus, brain and testes-associated protein</fullName>
    </alternativeName>
</protein>
<accession>Q32KL8</accession>
<keyword id="KW-0963">Cytoplasm</keyword>
<keyword id="KW-0217">Developmental protein</keyword>
<keyword id="KW-0221">Differentiation</keyword>
<keyword id="KW-1185">Reference proteome</keyword>
<keyword id="KW-0744">Spermatogenesis</keyword>
<comment type="function">
    <text evidence="1">May play a role in spermatid differentiation. Modulates thymic stromal cell proliferation and thymus function.</text>
</comment>
<comment type="subcellular location">
    <subcellularLocation>
        <location evidence="2">Cytoplasm</location>
        <location evidence="2">Cytosol</location>
    </subcellularLocation>
</comment>
<comment type="similarity">
    <text evidence="4">Belongs to the TBATA family.</text>
</comment>
<name>TBATA_BOVIN</name>
<reference evidence="5" key="1">
    <citation type="submission" date="2005-11" db="EMBL/GenBank/DDBJ databases">
        <authorList>
            <consortium name="NIH - Mammalian Gene Collection (MGC) project"/>
        </authorList>
    </citation>
    <scope>NUCLEOTIDE SEQUENCE [LARGE SCALE MRNA]</scope>
    <source>
        <strain evidence="5">Crossbred X Angus</strain>
        <tissue evidence="5">Liver</tissue>
    </source>
</reference>
<gene>
    <name type="primary">TBATA</name>
    <name type="synonym">SPATIAL</name>
</gene>
<dbReference type="EMBL" id="BC110031">
    <property type="protein sequence ID" value="AAI10032.1"/>
    <property type="molecule type" value="mRNA"/>
</dbReference>
<dbReference type="RefSeq" id="NP_001033210.2">
    <property type="nucleotide sequence ID" value="NM_001038121.2"/>
</dbReference>
<dbReference type="FunCoup" id="Q32KL8">
    <property type="interactions" value="23"/>
</dbReference>
<dbReference type="STRING" id="9913.ENSBTAP00000036511"/>
<dbReference type="PaxDb" id="9913-ENSBTAP00000036511"/>
<dbReference type="GeneID" id="515913"/>
<dbReference type="KEGG" id="bta:515913"/>
<dbReference type="CTD" id="219793"/>
<dbReference type="eggNOG" id="ENOG502RZQH">
    <property type="taxonomic scope" value="Eukaryota"/>
</dbReference>
<dbReference type="InParanoid" id="Q32KL8"/>
<dbReference type="OrthoDB" id="9982103at2759"/>
<dbReference type="Proteomes" id="UP000009136">
    <property type="component" value="Unplaced"/>
</dbReference>
<dbReference type="GO" id="GO:0005829">
    <property type="term" value="C:cytosol"/>
    <property type="evidence" value="ECO:0007669"/>
    <property type="project" value="UniProtKB-SubCell"/>
</dbReference>
<dbReference type="GO" id="GO:0030154">
    <property type="term" value="P:cell differentiation"/>
    <property type="evidence" value="ECO:0007669"/>
    <property type="project" value="UniProtKB-KW"/>
</dbReference>
<dbReference type="GO" id="GO:0007283">
    <property type="term" value="P:spermatogenesis"/>
    <property type="evidence" value="ECO:0007669"/>
    <property type="project" value="UniProtKB-KW"/>
</dbReference>
<dbReference type="InterPro" id="IPR037394">
    <property type="entry name" value="TBATA-like"/>
</dbReference>
<dbReference type="PANTHER" id="PTHR33772:SF3">
    <property type="entry name" value="PROTEIN TBATA"/>
    <property type="match status" value="1"/>
</dbReference>
<dbReference type="PANTHER" id="PTHR33772">
    <property type="entry name" value="THYMUS, BRAIN AND TESTES-ASSOCIATED"/>
    <property type="match status" value="1"/>
</dbReference>
<dbReference type="Pfam" id="PF15256">
    <property type="entry name" value="SPATIAL"/>
    <property type="match status" value="1"/>
</dbReference>
<proteinExistence type="evidence at transcript level"/>
<sequence length="333" mass="37398">MATEVRAQLAERSLPSPKGELKLEKKSGCQPRSHGDSGPQKELMIPGIVDFKLIREAVRTSKPQTPSAYRFGRLSHHSFFSRHHPQPQHVTHIQDLTGKPVCVVRDELSLPTISVPVGDPQSNRDPRLYSEAWKKELKDLASRVAIFTKESELKSKEKEEPQREQGAKYSAETGRLIPASTWAMARRHSHQGRNQPASRDEGDQTFVLQDQELLILELLSQILQTDSLNAIQFWLLYAPAKEKDMALGLLQTAVAQLLPQPLVPIPAEKLLNQLLEVQDSLQERHQLPYSQSPKKMKTPPLSKSEKPENIGKAQVLRVHSSQNPEEKAAKAEG</sequence>
<feature type="chain" id="PRO_0000351146" description="Protein TBATA">
    <location>
        <begin position="1"/>
        <end position="333"/>
    </location>
</feature>
<feature type="region of interest" description="Disordered" evidence="3">
    <location>
        <begin position="1"/>
        <end position="42"/>
    </location>
</feature>
<feature type="region of interest" description="Disordered" evidence="3">
    <location>
        <begin position="284"/>
        <end position="333"/>
    </location>
</feature>
<feature type="compositionally biased region" description="Basic and acidic residues" evidence="3">
    <location>
        <begin position="324"/>
        <end position="333"/>
    </location>
</feature>
<evidence type="ECO:0000250" key="1"/>
<evidence type="ECO:0000250" key="2">
    <source>
        <dbReference type="UniProtKB" id="Q7TSD4"/>
    </source>
</evidence>
<evidence type="ECO:0000256" key="3">
    <source>
        <dbReference type="SAM" id="MobiDB-lite"/>
    </source>
</evidence>
<evidence type="ECO:0000305" key="4"/>
<evidence type="ECO:0000312" key="5">
    <source>
        <dbReference type="EMBL" id="AAI10032.1"/>
    </source>
</evidence>
<organism>
    <name type="scientific">Bos taurus</name>
    <name type="common">Bovine</name>
    <dbReference type="NCBI Taxonomy" id="9913"/>
    <lineage>
        <taxon>Eukaryota</taxon>
        <taxon>Metazoa</taxon>
        <taxon>Chordata</taxon>
        <taxon>Craniata</taxon>
        <taxon>Vertebrata</taxon>
        <taxon>Euteleostomi</taxon>
        <taxon>Mammalia</taxon>
        <taxon>Eutheria</taxon>
        <taxon>Laurasiatheria</taxon>
        <taxon>Artiodactyla</taxon>
        <taxon>Ruminantia</taxon>
        <taxon>Pecora</taxon>
        <taxon>Bovidae</taxon>
        <taxon>Bovinae</taxon>
        <taxon>Bos</taxon>
    </lineage>
</organism>